<keyword id="KW-0030">Aminoacyl-tRNA synthetase</keyword>
<keyword id="KW-0067">ATP-binding</keyword>
<keyword id="KW-0963">Cytoplasm</keyword>
<keyword id="KW-0436">Ligase</keyword>
<keyword id="KW-0460">Magnesium</keyword>
<keyword id="KW-0479">Metal-binding</keyword>
<keyword id="KW-0547">Nucleotide-binding</keyword>
<keyword id="KW-0648">Protein biosynthesis</keyword>
<keyword id="KW-1185">Reference proteome</keyword>
<protein>
    <recommendedName>
        <fullName evidence="1">Lysine--tRNA ligase</fullName>
        <ecNumber evidence="1">6.1.1.6</ecNumber>
    </recommendedName>
    <alternativeName>
        <fullName evidence="1">Lysyl-tRNA synthetase</fullName>
        <shortName evidence="1">LysRS</shortName>
    </alternativeName>
</protein>
<evidence type="ECO:0000255" key="1">
    <source>
        <dbReference type="HAMAP-Rule" id="MF_00252"/>
    </source>
</evidence>
<gene>
    <name evidence="1" type="primary">lysS</name>
    <name type="ordered locus">Psyc_1054</name>
</gene>
<accession>Q4FSV2</accession>
<comment type="catalytic activity">
    <reaction evidence="1">
        <text>tRNA(Lys) + L-lysine + ATP = L-lysyl-tRNA(Lys) + AMP + diphosphate</text>
        <dbReference type="Rhea" id="RHEA:20792"/>
        <dbReference type="Rhea" id="RHEA-COMP:9696"/>
        <dbReference type="Rhea" id="RHEA-COMP:9697"/>
        <dbReference type="ChEBI" id="CHEBI:30616"/>
        <dbReference type="ChEBI" id="CHEBI:32551"/>
        <dbReference type="ChEBI" id="CHEBI:33019"/>
        <dbReference type="ChEBI" id="CHEBI:78442"/>
        <dbReference type="ChEBI" id="CHEBI:78529"/>
        <dbReference type="ChEBI" id="CHEBI:456215"/>
        <dbReference type="EC" id="6.1.1.6"/>
    </reaction>
</comment>
<comment type="cofactor">
    <cofactor evidence="1">
        <name>Mg(2+)</name>
        <dbReference type="ChEBI" id="CHEBI:18420"/>
    </cofactor>
    <text evidence="1">Binds 3 Mg(2+) ions per subunit.</text>
</comment>
<comment type="subunit">
    <text evidence="1">Homodimer.</text>
</comment>
<comment type="subcellular location">
    <subcellularLocation>
        <location evidence="1">Cytoplasm</location>
    </subcellularLocation>
</comment>
<comment type="similarity">
    <text evidence="1">Belongs to the class-II aminoacyl-tRNA synthetase family.</text>
</comment>
<reference key="1">
    <citation type="journal article" date="2010" name="Appl. Environ. Microbiol.">
        <title>The genome sequence of Psychrobacter arcticus 273-4, a psychroactive Siberian permafrost bacterium, reveals mechanisms for adaptation to low-temperature growth.</title>
        <authorList>
            <person name="Ayala-del-Rio H.L."/>
            <person name="Chain P.S."/>
            <person name="Grzymski J.J."/>
            <person name="Ponder M.A."/>
            <person name="Ivanova N."/>
            <person name="Bergholz P.W."/>
            <person name="Di Bartolo G."/>
            <person name="Hauser L."/>
            <person name="Land M."/>
            <person name="Bakermans C."/>
            <person name="Rodrigues D."/>
            <person name="Klappenbach J."/>
            <person name="Zarka D."/>
            <person name="Larimer F."/>
            <person name="Richardson P."/>
            <person name="Murray A."/>
            <person name="Thomashow M."/>
            <person name="Tiedje J.M."/>
        </authorList>
    </citation>
    <scope>NUCLEOTIDE SEQUENCE [LARGE SCALE GENOMIC DNA]</scope>
    <source>
        <strain>DSM 17307 / VKM B-2377 / 273-4</strain>
    </source>
</reference>
<feature type="chain" id="PRO_1000012915" description="Lysine--tRNA ligase">
    <location>
        <begin position="1"/>
        <end position="514"/>
    </location>
</feature>
<feature type="binding site" evidence="1">
    <location>
        <position position="422"/>
    </location>
    <ligand>
        <name>Mg(2+)</name>
        <dbReference type="ChEBI" id="CHEBI:18420"/>
        <label>1</label>
    </ligand>
</feature>
<feature type="binding site" evidence="1">
    <location>
        <position position="429"/>
    </location>
    <ligand>
        <name>Mg(2+)</name>
        <dbReference type="ChEBI" id="CHEBI:18420"/>
        <label>1</label>
    </ligand>
</feature>
<feature type="binding site" evidence="1">
    <location>
        <position position="429"/>
    </location>
    <ligand>
        <name>Mg(2+)</name>
        <dbReference type="ChEBI" id="CHEBI:18420"/>
        <label>2</label>
    </ligand>
</feature>
<organism>
    <name type="scientific">Psychrobacter arcticus (strain DSM 17307 / VKM B-2377 / 273-4)</name>
    <dbReference type="NCBI Taxonomy" id="259536"/>
    <lineage>
        <taxon>Bacteria</taxon>
        <taxon>Pseudomonadati</taxon>
        <taxon>Pseudomonadota</taxon>
        <taxon>Gammaproteobacteria</taxon>
        <taxon>Moraxellales</taxon>
        <taxon>Moraxellaceae</taxon>
        <taxon>Psychrobacter</taxon>
    </lineage>
</organism>
<dbReference type="EC" id="6.1.1.6" evidence="1"/>
<dbReference type="EMBL" id="CP000082">
    <property type="protein sequence ID" value="AAZ18906.1"/>
    <property type="molecule type" value="Genomic_DNA"/>
</dbReference>
<dbReference type="RefSeq" id="WP_011280328.1">
    <property type="nucleotide sequence ID" value="NC_007204.1"/>
</dbReference>
<dbReference type="SMR" id="Q4FSV2"/>
<dbReference type="STRING" id="259536.Psyc_1054"/>
<dbReference type="KEGG" id="par:Psyc_1054"/>
<dbReference type="eggNOG" id="COG1190">
    <property type="taxonomic scope" value="Bacteria"/>
</dbReference>
<dbReference type="HOGENOM" id="CLU_008255_6_0_6"/>
<dbReference type="OrthoDB" id="9801152at2"/>
<dbReference type="Proteomes" id="UP000000546">
    <property type="component" value="Chromosome"/>
</dbReference>
<dbReference type="GO" id="GO:0005829">
    <property type="term" value="C:cytosol"/>
    <property type="evidence" value="ECO:0007669"/>
    <property type="project" value="TreeGrafter"/>
</dbReference>
<dbReference type="GO" id="GO:0005524">
    <property type="term" value="F:ATP binding"/>
    <property type="evidence" value="ECO:0007669"/>
    <property type="project" value="UniProtKB-UniRule"/>
</dbReference>
<dbReference type="GO" id="GO:0004824">
    <property type="term" value="F:lysine-tRNA ligase activity"/>
    <property type="evidence" value="ECO:0007669"/>
    <property type="project" value="UniProtKB-UniRule"/>
</dbReference>
<dbReference type="GO" id="GO:0000287">
    <property type="term" value="F:magnesium ion binding"/>
    <property type="evidence" value="ECO:0007669"/>
    <property type="project" value="UniProtKB-UniRule"/>
</dbReference>
<dbReference type="GO" id="GO:0000049">
    <property type="term" value="F:tRNA binding"/>
    <property type="evidence" value="ECO:0007669"/>
    <property type="project" value="TreeGrafter"/>
</dbReference>
<dbReference type="GO" id="GO:0006430">
    <property type="term" value="P:lysyl-tRNA aminoacylation"/>
    <property type="evidence" value="ECO:0007669"/>
    <property type="project" value="UniProtKB-UniRule"/>
</dbReference>
<dbReference type="CDD" id="cd00775">
    <property type="entry name" value="LysRS_core"/>
    <property type="match status" value="1"/>
</dbReference>
<dbReference type="CDD" id="cd04322">
    <property type="entry name" value="LysRS_N"/>
    <property type="match status" value="1"/>
</dbReference>
<dbReference type="FunFam" id="2.40.50.140:FF:000024">
    <property type="entry name" value="Lysine--tRNA ligase"/>
    <property type="match status" value="1"/>
</dbReference>
<dbReference type="FunFam" id="3.30.930.10:FF:000001">
    <property type="entry name" value="Lysine--tRNA ligase"/>
    <property type="match status" value="1"/>
</dbReference>
<dbReference type="Gene3D" id="3.30.930.10">
    <property type="entry name" value="Bira Bifunctional Protein, Domain 2"/>
    <property type="match status" value="1"/>
</dbReference>
<dbReference type="Gene3D" id="2.40.50.140">
    <property type="entry name" value="Nucleic acid-binding proteins"/>
    <property type="match status" value="1"/>
</dbReference>
<dbReference type="HAMAP" id="MF_00252">
    <property type="entry name" value="Lys_tRNA_synth_class2"/>
    <property type="match status" value="1"/>
</dbReference>
<dbReference type="InterPro" id="IPR004364">
    <property type="entry name" value="Aa-tRNA-synt_II"/>
</dbReference>
<dbReference type="InterPro" id="IPR006195">
    <property type="entry name" value="aa-tRNA-synth_II"/>
</dbReference>
<dbReference type="InterPro" id="IPR045864">
    <property type="entry name" value="aa-tRNA-synth_II/BPL/LPL"/>
</dbReference>
<dbReference type="InterPro" id="IPR002313">
    <property type="entry name" value="Lys-tRNA-ligase_II"/>
</dbReference>
<dbReference type="InterPro" id="IPR044136">
    <property type="entry name" value="Lys-tRNA-ligase_II_N"/>
</dbReference>
<dbReference type="InterPro" id="IPR018149">
    <property type="entry name" value="Lys-tRNA-synth_II_C"/>
</dbReference>
<dbReference type="InterPro" id="IPR012340">
    <property type="entry name" value="NA-bd_OB-fold"/>
</dbReference>
<dbReference type="InterPro" id="IPR004365">
    <property type="entry name" value="NA-bd_OB_tRNA"/>
</dbReference>
<dbReference type="NCBIfam" id="TIGR00499">
    <property type="entry name" value="lysS_bact"/>
    <property type="match status" value="1"/>
</dbReference>
<dbReference type="NCBIfam" id="NF001756">
    <property type="entry name" value="PRK00484.1"/>
    <property type="match status" value="1"/>
</dbReference>
<dbReference type="PANTHER" id="PTHR42918:SF15">
    <property type="entry name" value="LYSINE--TRNA LIGASE, CHLOROPLASTIC_MITOCHONDRIAL"/>
    <property type="match status" value="1"/>
</dbReference>
<dbReference type="PANTHER" id="PTHR42918">
    <property type="entry name" value="LYSYL-TRNA SYNTHETASE"/>
    <property type="match status" value="1"/>
</dbReference>
<dbReference type="Pfam" id="PF00152">
    <property type="entry name" value="tRNA-synt_2"/>
    <property type="match status" value="1"/>
</dbReference>
<dbReference type="Pfam" id="PF01336">
    <property type="entry name" value="tRNA_anti-codon"/>
    <property type="match status" value="1"/>
</dbReference>
<dbReference type="PRINTS" id="PR00982">
    <property type="entry name" value="TRNASYNTHLYS"/>
</dbReference>
<dbReference type="SUPFAM" id="SSF55681">
    <property type="entry name" value="Class II aaRS and biotin synthetases"/>
    <property type="match status" value="1"/>
</dbReference>
<dbReference type="SUPFAM" id="SSF50249">
    <property type="entry name" value="Nucleic acid-binding proteins"/>
    <property type="match status" value="1"/>
</dbReference>
<dbReference type="PROSITE" id="PS50862">
    <property type="entry name" value="AA_TRNA_LIGASE_II"/>
    <property type="match status" value="1"/>
</dbReference>
<name>SYK_PSYA2</name>
<sequence>MSKPNNQNQQNNQEQIPEDANELIAQLQAKLEDIVASGKQPYPNTFKRTDYAQDLQTAFEGISKQEIADNDAKGEKTQVNVAGRVMLNRGAFIVIQDMTGRIQLYVARKELDEETLADIKSLDLGDIVGVSGYIGRSGKGDLYVHIEEMQLLTKALRPMPNKFHGLADVEARYRNRHLDLMTNETTRDTFMVRSQVISGIRKFMLNERFMEVETPMMHPIPGGAVARPFVTHHNALDMPLYLRIAPELYLKRLVVGGFEKVFEINRSFRNEGVSTRHNPEFTMIEFYQAYADYHDLMDLTERLFNELATDILGTTEITYQEEDISLKAPFERLSMSNAIAKYAENFDMARINDRDYLAEYASTTLKQQVKDVFGVGKLQTIIFEETAEHQLRQPTFITEYPAETSPLARRSDDNPEITDRFELFVGGRELANGFSELNDPADQAERFLGQVAEKDAGDDEAMHFDAEYIEALSYGLPPTAGEGIGIDRLVMLLTDSASIRDVILFPHMRRKLEG</sequence>
<proteinExistence type="inferred from homology"/>